<accession>P40012</accession>
<accession>D3DLR1</accession>
<name>PPOX_YEAST</name>
<dbReference type="EC" id="1.3.3.4" evidence="3"/>
<dbReference type="EMBL" id="Z71381">
    <property type="protein sequence ID" value="CAA95981.1"/>
    <property type="molecule type" value="Genomic_DNA"/>
</dbReference>
<dbReference type="EMBL" id="U18778">
    <property type="protein sequence ID" value="AAB64547.1"/>
    <property type="molecule type" value="Genomic_DNA"/>
</dbReference>
<dbReference type="EMBL" id="BK006939">
    <property type="protein sequence ID" value="DAA07665.1"/>
    <property type="molecule type" value="Genomic_DNA"/>
</dbReference>
<dbReference type="PIR" id="S50472">
    <property type="entry name" value="S50472"/>
</dbReference>
<dbReference type="RefSeq" id="NP_010930.1">
    <property type="nucleotide sequence ID" value="NM_001178905.1"/>
</dbReference>
<dbReference type="SMR" id="P40012"/>
<dbReference type="BioGRID" id="36746">
    <property type="interactions" value="44"/>
</dbReference>
<dbReference type="FunCoup" id="P40012">
    <property type="interactions" value="618"/>
</dbReference>
<dbReference type="IntAct" id="P40012">
    <property type="interactions" value="2"/>
</dbReference>
<dbReference type="MINT" id="P40012"/>
<dbReference type="STRING" id="4932.YER014W"/>
<dbReference type="iPTMnet" id="P40012"/>
<dbReference type="SwissPalm" id="P40012"/>
<dbReference type="PaxDb" id="4932-YER014W"/>
<dbReference type="PeptideAtlas" id="P40012"/>
<dbReference type="EnsemblFungi" id="YER014W_mRNA">
    <property type="protein sequence ID" value="YER014W"/>
    <property type="gene ID" value="YER014W"/>
</dbReference>
<dbReference type="GeneID" id="856733"/>
<dbReference type="KEGG" id="sce:YER014W"/>
<dbReference type="AGR" id="SGD:S000000816"/>
<dbReference type="SGD" id="S000000816">
    <property type="gene designation" value="HEM14"/>
</dbReference>
<dbReference type="VEuPathDB" id="FungiDB:YER014W"/>
<dbReference type="eggNOG" id="KOG1276">
    <property type="taxonomic scope" value="Eukaryota"/>
</dbReference>
<dbReference type="GeneTree" id="ENSGT00390000008744"/>
<dbReference type="HOGENOM" id="CLU_009629_1_2_1"/>
<dbReference type="InParanoid" id="P40012"/>
<dbReference type="OMA" id="EHNQAVQ"/>
<dbReference type="OrthoDB" id="438553at2759"/>
<dbReference type="BioCyc" id="YEAST:YER014W-MONOMER"/>
<dbReference type="Reactome" id="R-SCE-189451">
    <property type="pathway name" value="Heme biosynthesis"/>
</dbReference>
<dbReference type="SABIO-RK" id="P40012"/>
<dbReference type="UniPathway" id="UPA00251">
    <property type="reaction ID" value="UER00324"/>
</dbReference>
<dbReference type="BioGRID-ORCS" id="856733">
    <property type="hits" value="3 hits in 10 CRISPR screens"/>
</dbReference>
<dbReference type="PRO" id="PR:P40012"/>
<dbReference type="Proteomes" id="UP000002311">
    <property type="component" value="Chromosome V"/>
</dbReference>
<dbReference type="RNAct" id="P40012">
    <property type="molecule type" value="protein"/>
</dbReference>
<dbReference type="GO" id="GO:0005743">
    <property type="term" value="C:mitochondrial inner membrane"/>
    <property type="evidence" value="ECO:0000314"/>
    <property type="project" value="SGD"/>
</dbReference>
<dbReference type="GO" id="GO:0005739">
    <property type="term" value="C:mitochondrion"/>
    <property type="evidence" value="ECO:0007005"/>
    <property type="project" value="SGD"/>
</dbReference>
<dbReference type="GO" id="GO:0004729">
    <property type="term" value="F:oxygen-dependent protoporphyrinogen oxidase activity"/>
    <property type="evidence" value="ECO:0000314"/>
    <property type="project" value="SGD"/>
</dbReference>
<dbReference type="GO" id="GO:0006783">
    <property type="term" value="P:heme biosynthetic process"/>
    <property type="evidence" value="ECO:0000315"/>
    <property type="project" value="SGD"/>
</dbReference>
<dbReference type="GO" id="GO:0006782">
    <property type="term" value="P:protoporphyrinogen IX biosynthetic process"/>
    <property type="evidence" value="ECO:0007669"/>
    <property type="project" value="UniProtKB-UniPathway"/>
</dbReference>
<dbReference type="FunFam" id="3.50.50.60:FF:000276">
    <property type="entry name" value="Protoporphyrinogen oxidase"/>
    <property type="match status" value="1"/>
</dbReference>
<dbReference type="Gene3D" id="3.50.50.60">
    <property type="entry name" value="FAD/NAD(P)-binding domain"/>
    <property type="match status" value="1"/>
</dbReference>
<dbReference type="InterPro" id="IPR036188">
    <property type="entry name" value="FAD/NAD-bd_sf"/>
</dbReference>
<dbReference type="InterPro" id="IPR004572">
    <property type="entry name" value="Protoporphyrinogen_oxidase"/>
</dbReference>
<dbReference type="InterPro" id="IPR050464">
    <property type="entry name" value="Zeta_carotene_desat/Oxidored"/>
</dbReference>
<dbReference type="NCBIfam" id="TIGR00562">
    <property type="entry name" value="proto_IX_ox"/>
    <property type="match status" value="1"/>
</dbReference>
<dbReference type="PANTHER" id="PTHR42923">
    <property type="entry name" value="PROTOPORPHYRINOGEN OXIDASE"/>
    <property type="match status" value="1"/>
</dbReference>
<dbReference type="PANTHER" id="PTHR42923:SF3">
    <property type="entry name" value="PROTOPORPHYRINOGEN OXIDASE"/>
    <property type="match status" value="1"/>
</dbReference>
<dbReference type="Pfam" id="PF13450">
    <property type="entry name" value="NAD_binding_8"/>
    <property type="match status" value="1"/>
</dbReference>
<dbReference type="SUPFAM" id="SSF54373">
    <property type="entry name" value="FAD-linked reductases, C-terminal domain"/>
    <property type="match status" value="1"/>
</dbReference>
<dbReference type="SUPFAM" id="SSF51905">
    <property type="entry name" value="FAD/NAD(P)-binding domain"/>
    <property type="match status" value="1"/>
</dbReference>
<proteinExistence type="evidence at protein level"/>
<reference key="1">
    <citation type="journal article" date="1996" name="J. Biol. Chem.">
        <title>Cloning and characterization of the yeast HEM14 gene coding for protoporphyrinogen oxidase, the molecular target of diphenyl ether-type herbicides.</title>
        <authorList>
            <person name="Camadro J.-M."/>
            <person name="Labbe P."/>
        </authorList>
    </citation>
    <scope>NUCLEOTIDE SEQUENCE [GENOMIC DNA]</scope>
    <scope>FUNCTION</scope>
    <scope>MUTAGENESIS OF LEU-422 AND LYS-424</scope>
</reference>
<reference key="2">
    <citation type="journal article" date="1997" name="Nature">
        <title>The nucleotide sequence of Saccharomyces cerevisiae chromosome V.</title>
        <authorList>
            <person name="Dietrich F.S."/>
            <person name="Mulligan J.T."/>
            <person name="Hennessy K.M."/>
            <person name="Yelton M.A."/>
            <person name="Allen E."/>
            <person name="Araujo R."/>
            <person name="Aviles E."/>
            <person name="Berno A."/>
            <person name="Brennan T."/>
            <person name="Carpenter J."/>
            <person name="Chen E."/>
            <person name="Cherry J.M."/>
            <person name="Chung E."/>
            <person name="Duncan M."/>
            <person name="Guzman E."/>
            <person name="Hartzell G."/>
            <person name="Hunicke-Smith S."/>
            <person name="Hyman R.W."/>
            <person name="Kayser A."/>
            <person name="Komp C."/>
            <person name="Lashkari D."/>
            <person name="Lew H."/>
            <person name="Lin D."/>
            <person name="Mosedale D."/>
            <person name="Nakahara K."/>
            <person name="Namath A."/>
            <person name="Norgren R."/>
            <person name="Oefner P."/>
            <person name="Oh C."/>
            <person name="Petel F.X."/>
            <person name="Roberts D."/>
            <person name="Sehl P."/>
            <person name="Schramm S."/>
            <person name="Shogren T."/>
            <person name="Smith V."/>
            <person name="Taylor P."/>
            <person name="Wei Y."/>
            <person name="Botstein D."/>
            <person name="Davis R.W."/>
        </authorList>
    </citation>
    <scope>NUCLEOTIDE SEQUENCE [LARGE SCALE GENOMIC DNA]</scope>
    <source>
        <strain>ATCC 204508 / S288c</strain>
    </source>
</reference>
<reference key="3">
    <citation type="journal article" date="2014" name="G3 (Bethesda)">
        <title>The reference genome sequence of Saccharomyces cerevisiae: Then and now.</title>
        <authorList>
            <person name="Engel S.R."/>
            <person name="Dietrich F.S."/>
            <person name="Fisk D.G."/>
            <person name="Binkley G."/>
            <person name="Balakrishnan R."/>
            <person name="Costanzo M.C."/>
            <person name="Dwight S.S."/>
            <person name="Hitz B.C."/>
            <person name="Karra K."/>
            <person name="Nash R.S."/>
            <person name="Weng S."/>
            <person name="Wong E.D."/>
            <person name="Lloyd P."/>
            <person name="Skrzypek M.S."/>
            <person name="Miyasato S.R."/>
            <person name="Simison M."/>
            <person name="Cherry J.M."/>
        </authorList>
    </citation>
    <scope>GENOME REANNOTATION</scope>
    <source>
        <strain>ATCC 204508 / S288c</strain>
    </source>
</reference>
<reference key="4">
    <citation type="journal article" date="1994" name="J. Biol. Chem.">
        <title>Purification and properties of protoporphyrinogen oxidase from the yeast Saccharomyces cerevisiae. Mitochondrial location and evidence for a precursor form of the protein.</title>
        <authorList>
            <person name="Camadro J.-M."/>
            <person name="Thome F."/>
            <person name="Brouillet N."/>
            <person name="Labbe P."/>
        </authorList>
    </citation>
    <scope>SUBCELLULAR LOCATION</scope>
    <scope>FUNCTION</scope>
    <scope>CATALYTIC ACTIVITY</scope>
    <scope>BIOPHYSICOCHEMICAL PROPERTIES</scope>
    <source>
        <strain>ATCC 25657 / D273-10B</strain>
    </source>
</reference>
<reference key="5">
    <citation type="journal article" date="2003" name="Nature">
        <title>Global analysis of protein expression in yeast.</title>
        <authorList>
            <person name="Ghaemmaghami S."/>
            <person name="Huh W.-K."/>
            <person name="Bower K."/>
            <person name="Howson R.W."/>
            <person name="Belle A."/>
            <person name="Dephoure N."/>
            <person name="O'Shea E.K."/>
            <person name="Weissman J.S."/>
        </authorList>
    </citation>
    <scope>LEVEL OF PROTEIN EXPRESSION [LARGE SCALE ANALYSIS]</scope>
</reference>
<reference key="6">
    <citation type="journal article" date="2012" name="Proc. Natl. Acad. Sci. U.S.A.">
        <title>N-terminal acetylome analyses and functional insights of the N-terminal acetyltransferase NatB.</title>
        <authorList>
            <person name="Van Damme P."/>
            <person name="Lasa M."/>
            <person name="Polevoda B."/>
            <person name="Gazquez C."/>
            <person name="Elosegui-Artola A."/>
            <person name="Kim D.S."/>
            <person name="De Juan-Pardo E."/>
            <person name="Demeyer K."/>
            <person name="Hole K."/>
            <person name="Larrea E."/>
            <person name="Timmerman E."/>
            <person name="Prieto J."/>
            <person name="Arnesen T."/>
            <person name="Sherman F."/>
            <person name="Gevaert K."/>
            <person name="Aldabe R."/>
        </authorList>
    </citation>
    <scope>IDENTIFICATION BY MASS SPECTROMETRY [LARGE SCALE ANALYSIS]</scope>
</reference>
<feature type="chain" id="PRO_0000135274" description="Protoporphyrinogen oxidase">
    <location>
        <begin position="1"/>
        <end position="539"/>
    </location>
</feature>
<feature type="binding site" evidence="1">
    <location>
        <begin position="18"/>
        <end position="23"/>
    </location>
    <ligand>
        <name>FAD</name>
        <dbReference type="ChEBI" id="CHEBI:57692"/>
    </ligand>
</feature>
<feature type="binding site" evidence="1">
    <location>
        <begin position="43"/>
        <end position="44"/>
    </location>
    <ligand>
        <name>FAD</name>
        <dbReference type="ChEBI" id="CHEBI:57692"/>
    </ligand>
</feature>
<feature type="binding site" evidence="1">
    <location>
        <position position="51"/>
    </location>
    <ligand>
        <name>FAD</name>
        <dbReference type="ChEBI" id="CHEBI:57692"/>
    </ligand>
</feature>
<feature type="binding site" evidence="1">
    <location>
        <begin position="70"/>
        <end position="73"/>
    </location>
    <ligand>
        <name>FAD</name>
        <dbReference type="ChEBI" id="CHEBI:57692"/>
    </ligand>
</feature>
<feature type="binding site" evidence="1">
    <location>
        <position position="300"/>
    </location>
    <ligand>
        <name>FAD</name>
        <dbReference type="ChEBI" id="CHEBI:57692"/>
    </ligand>
</feature>
<feature type="binding site" evidence="1">
    <location>
        <begin position="521"/>
        <end position="523"/>
    </location>
    <ligand>
        <name>FAD</name>
        <dbReference type="ChEBI" id="CHEBI:57692"/>
    </ligand>
</feature>
<feature type="mutagenesis site" description="In HEM14-1; loss of activity." evidence="4">
    <original>L</original>
    <variation>P</variation>
    <location>
        <position position="422"/>
    </location>
</feature>
<feature type="mutagenesis site" description="In HEM14-1; loss of activity." evidence="4">
    <original>K</original>
    <variation>E</variation>
    <location>
        <position position="424"/>
    </location>
</feature>
<sequence>MLLPLTKLKPRAKVAVVGGGVSGLCFTYFLSKLRPDVEITLFESQNRTGGWIYSCNTRDMSGNPIMLEKGPRTLRGVSDGTVLIMDTLKDLGKEAVIQSIDKGCIADKKFLLDPSDKLVQVPNSISTTVKFLLNPLGKGLITGMMGEWFRKKSPHPGQDESVESICDRRFGNNYISNNMISALLRGIYGDDVSLLSAKRTFKKIYYNELKHGSNTQAMIDNMRGKSRSKKTENLHQSLTGCLNDYSNAFGKDRSKLLDLSNTLKKYPMLGLAGGLETFPKIVRNALNEFKNVKIVTGNPVTQIMKRPANETTIGLKAKSGDQYETFDHLRLTITPPKIAKLLPKDQNSLSKLLDEIQSNTIILVNYYLPNKDVIDADLQGFGYLVPKSNKNPGKLLGVIFDSVIERNFKPLFDKLSTNPNALNKYTKVTAMIGGCMLNEHGVPVVPSREVTINAVKDALNNHLGISNKDLEAGQWEFTIADRCLPRFHVGYDAWQERAERKLQESYGQTVSVGGMGFSRSPGVPDVIVDGFNDALQLSK</sequence>
<protein>
    <recommendedName>
        <fullName evidence="5">Protoporphyrinogen oxidase</fullName>
        <shortName evidence="5">PPO</shortName>
        <ecNumber evidence="3">1.3.3.4</ecNumber>
    </recommendedName>
</protein>
<keyword id="KW-0274">FAD</keyword>
<keyword id="KW-0285">Flavoprotein</keyword>
<keyword id="KW-0350">Heme biosynthesis</keyword>
<keyword id="KW-0472">Membrane</keyword>
<keyword id="KW-0496">Mitochondrion</keyword>
<keyword id="KW-0999">Mitochondrion inner membrane</keyword>
<keyword id="KW-0560">Oxidoreductase</keyword>
<keyword id="KW-0627">Porphyrin biosynthesis</keyword>
<keyword id="KW-1185">Reference proteome</keyword>
<evidence type="ECO:0000250" key="1">
    <source>
        <dbReference type="UniProtKB" id="P32397"/>
    </source>
</evidence>
<evidence type="ECO:0000269" key="2">
    <source>
    </source>
</evidence>
<evidence type="ECO:0000269" key="3">
    <source>
    </source>
</evidence>
<evidence type="ECO:0000269" key="4">
    <source>
    </source>
</evidence>
<evidence type="ECO:0000303" key="5">
    <source>
    </source>
</evidence>
<evidence type="ECO:0000305" key="6"/>
<organism>
    <name type="scientific">Saccharomyces cerevisiae (strain ATCC 204508 / S288c)</name>
    <name type="common">Baker's yeast</name>
    <dbReference type="NCBI Taxonomy" id="559292"/>
    <lineage>
        <taxon>Eukaryota</taxon>
        <taxon>Fungi</taxon>
        <taxon>Dikarya</taxon>
        <taxon>Ascomycota</taxon>
        <taxon>Saccharomycotina</taxon>
        <taxon>Saccharomycetes</taxon>
        <taxon>Saccharomycetales</taxon>
        <taxon>Saccharomycetaceae</taxon>
        <taxon>Saccharomyces</taxon>
    </lineage>
</organism>
<gene>
    <name evidence="5" type="primary">HEM14</name>
    <name type="ordered locus">YER014W</name>
</gene>
<comment type="function">
    <text evidence="3 4">Catalyzes the 6-electron oxidation of protoporphyrinogen-IX to form protoporphyrin-IX.</text>
</comment>
<comment type="catalytic activity">
    <reaction evidence="3">
        <text>protoporphyrinogen IX + 3 O2 = protoporphyrin IX + 3 H2O2</text>
        <dbReference type="Rhea" id="RHEA:25576"/>
        <dbReference type="ChEBI" id="CHEBI:15379"/>
        <dbReference type="ChEBI" id="CHEBI:16240"/>
        <dbReference type="ChEBI" id="CHEBI:57306"/>
        <dbReference type="ChEBI" id="CHEBI:57307"/>
        <dbReference type="EC" id="1.3.3.4"/>
    </reaction>
</comment>
<comment type="cofactor">
    <cofactor>
        <name>FAD</name>
        <dbReference type="ChEBI" id="CHEBI:57692"/>
    </cofactor>
    <text evidence="1">Binds 1 FAD per subunit.</text>
</comment>
<comment type="biophysicochemical properties">
    <kinetics>
        <KM evidence="3">0.1 uM for protoporphyrinogen IX</KM>
    </kinetics>
    <phDependence>
        <text evidence="3">Optimum pH is 7.2.</text>
    </phDependence>
</comment>
<comment type="pathway">
    <text evidence="3">Porphyrin-containing compound metabolism; protoporphyrin-IX biosynthesis; protoporphyrin-IX from protoporphyrinogen-IX: step 1/1.</text>
</comment>
<comment type="subcellular location">
    <subcellularLocation>
        <location evidence="3">Mitochondrion inner membrane</location>
    </subcellularLocation>
    <text evidence="3">Bound to the mitochondrial inner membrane with its active site facing the cytosolic side.</text>
</comment>
<comment type="miscellaneous">
    <text evidence="2">Present with 5350 molecules/cell in log phase SD medium.</text>
</comment>
<comment type="similarity">
    <text evidence="6">Belongs to the protoporphyrinogen/coproporphyrinogen oxidase family. Protoporphyrinogen oxidase subfamily.</text>
</comment>